<gene>
    <name evidence="1" type="primary">rev</name>
</gene>
<organismHost>
    <name type="scientific">Homo sapiens</name>
    <name type="common">Human</name>
    <dbReference type="NCBI Taxonomy" id="9606"/>
</organismHost>
<organism>
    <name type="scientific">Human immunodeficiency virus type 1 group M subtype B (isolate BRVA)</name>
    <name type="common">HIV-1</name>
    <dbReference type="NCBI Taxonomy" id="11693"/>
    <lineage>
        <taxon>Viruses</taxon>
        <taxon>Riboviria</taxon>
        <taxon>Pararnavirae</taxon>
        <taxon>Artverviricota</taxon>
        <taxon>Revtraviricetes</taxon>
        <taxon>Ortervirales</taxon>
        <taxon>Retroviridae</taxon>
        <taxon>Orthoretrovirinae</taxon>
        <taxon>Lentivirus</taxon>
        <taxon>Human immunodeficiency virus type 1</taxon>
    </lineage>
</organism>
<dbReference type="EMBL" id="M21098">
    <property type="protein sequence ID" value="AAA44219.1"/>
    <property type="molecule type" value="Genomic_RNA"/>
</dbReference>
<dbReference type="SMR" id="P12485"/>
<dbReference type="GO" id="GO:0030430">
    <property type="term" value="C:host cell cytoplasm"/>
    <property type="evidence" value="ECO:0007669"/>
    <property type="project" value="UniProtKB-SubCell"/>
</dbReference>
<dbReference type="GO" id="GO:0044196">
    <property type="term" value="C:host cell nucleolus"/>
    <property type="evidence" value="ECO:0007669"/>
    <property type="project" value="UniProtKB-SubCell"/>
</dbReference>
<dbReference type="GO" id="GO:0003700">
    <property type="term" value="F:DNA-binding transcription factor activity"/>
    <property type="evidence" value="ECO:0007669"/>
    <property type="project" value="InterPro"/>
</dbReference>
<dbReference type="GO" id="GO:0003723">
    <property type="term" value="F:RNA binding"/>
    <property type="evidence" value="ECO:0007669"/>
    <property type="project" value="UniProtKB-KW"/>
</dbReference>
<dbReference type="GO" id="GO:0051028">
    <property type="term" value="P:mRNA transport"/>
    <property type="evidence" value="ECO:0007669"/>
    <property type="project" value="UniProtKB-KW"/>
</dbReference>
<dbReference type="Gene3D" id="6.10.140.630">
    <property type="match status" value="1"/>
</dbReference>
<dbReference type="HAMAP" id="MF_04077">
    <property type="entry name" value="REV_HIV1"/>
    <property type="match status" value="1"/>
</dbReference>
<dbReference type="InterPro" id="IPR000625">
    <property type="entry name" value="REV_protein"/>
</dbReference>
<dbReference type="Pfam" id="PF00424">
    <property type="entry name" value="REV"/>
    <property type="match status" value="1"/>
</dbReference>
<evidence type="ECO:0000255" key="1">
    <source>
        <dbReference type="HAMAP-Rule" id="MF_04077"/>
    </source>
</evidence>
<evidence type="ECO:0000256" key="2">
    <source>
        <dbReference type="SAM" id="MobiDB-lite"/>
    </source>
</evidence>
<reference key="1">
    <citation type="journal article" date="1989" name="Virology">
        <title>Biological and molecular characterization of human immunodeficiency virus (HIV-1BR) from the brain of a patient with progressive dementia.</title>
        <authorList>
            <person name="Anand R."/>
            <person name="Thayer R."/>
            <person name="Srinivasan A."/>
            <person name="Nayyar S."/>
            <person name="Gardner M."/>
            <person name="Luciw P."/>
            <person name="Dandekar S."/>
        </authorList>
    </citation>
    <scope>NUCLEOTIDE SEQUENCE [GENOMIC RNA]</scope>
</reference>
<reference key="2">
    <citation type="journal article" date="1999" name="Arch. Biochem. Biophys.">
        <title>The ins and outs of HIV Rev.</title>
        <authorList>
            <person name="Hope T.J."/>
        </authorList>
    </citation>
    <scope>REVIEW</scope>
</reference>
<accession>P12485</accession>
<comment type="function">
    <text evidence="1">Escorts unspliced or incompletely spliced viral pre-mRNAs (late transcripts) out of the nucleus of infected cells. These pre-mRNAs carry a recognition sequence called Rev responsive element (RRE) located in the env gene, that is not present in fully spliced viral mRNAs (early transcripts). This function is essential since most viral proteins are translated from unspliced or partially spliced pre-mRNAs which cannot exit the nucleus by the pathway used by fully processed cellular mRNAs. Rev itself is translated from a fully spliced mRNA that readily exits the nucleus. Rev's nuclear localization signal (NLS) binds directly to KPNB1/Importin beta-1 without previous binding to KPNA1/Importin alpha-1. KPNB1 binds to the GDP bound form of RAN (Ran-GDP) and targets Rev to the nucleus. In the nucleus, the conversion from Ran-GDP to Ran-GTP dissociates Rev from KPNB1 and allows Rev's binding to the RRE in viral pre-mRNAs. Rev multimerization on the RRE via cooperative assembly exposes its nuclear export signal (NES) to the surface. Rev can then form a complex with XPO1/CRM1 and Ran-GTP, leading to nuclear export of the complex. Conversion from Ran-GTP to Ran-GDP mediates dissociation of the Rev/RRE/XPO1/RAN complex, so that Rev can return to the nucleus for a subsequent round of export. Beside KPNB1, also seems to interact with TNPO1/Transportin-1, RANBP5/IPO5 and IPO7/RANBP7 for nuclear import. The nucleoporin-like HRB/RIP is an essential cofactor that probably indirectly interacts with Rev to release HIV RNAs from the perinuclear region to the cytoplasm.</text>
</comment>
<comment type="subunit">
    <text evidence="1">Homomultimer; when bound to the RRE. Multimeric assembly is essential for activity and may involve XPO1. Binds to human KPNB1, XPO1, TNPO1, RANBP5 and IPO7. Interacts with the viral Integrase. Interacts with human KHDRBS1. Interacts with human NAP1; this interaction decreases Rev multimerization and stimulates its activity. Interacts with human DEAD-box helicases DDX3 and DDX24; these interactions may serve for viral RNA export to the cytoplasm and packaging, respectively. Interacts with human PSIP1; this interaction may inhibit HIV-1 DNA integration by promoting dissociation of the Integrase-LEDGF/p75 complex.</text>
</comment>
<comment type="subcellular location">
    <subcellularLocation>
        <location evidence="1">Host nucleus</location>
        <location evidence="1">Host nucleolus</location>
    </subcellularLocation>
    <subcellularLocation>
        <location evidence="1">Host cytoplasm</location>
    </subcellularLocation>
    <text evidence="1">The presence of both nuclear import and nuclear export signals leads to continuous shuttling between the nucleus and cytoplasm.</text>
</comment>
<comment type="domain">
    <text evidence="1">The RNA-binding motif binds to the RRE, a 240 bp stem-and-loop structure present in incompletely spliced viral pre-mRNAs. This region also contains the NLS which mediates nuclear localization via KPNB1 binding and, when the N-terminal sequence is present, nucleolar targeting. These overlapping functions prevent Rev bound to RRE from undesirable return to the nucleus. When Rev binds the RRE, the NLS becomes masked while the NES remains accessible. The leucine-rich NES mediates binding to human XPO1.</text>
</comment>
<comment type="PTM">
    <text evidence="1">Asymmetrically arginine dimethylated at one site by host PRMT6. Methylation impairs the RNA-binding activity and export of viral RNA from the nucleus to the cytoplasm.</text>
</comment>
<comment type="PTM">
    <text evidence="1">Phosphorylated by protein kinase CK2. Presence of, and maybe binding to the N-terminus of the regulatory beta subunit of CK2 is necessary for CK2-mediated Rev's phosphorylation.</text>
</comment>
<comment type="miscellaneous">
    <text>This virus is cytopathically active and was harvested from the brain tissue of a neurological AIDS patient.</text>
</comment>
<comment type="miscellaneous">
    <text evidence="1">HIV-1 lineages are divided in three main groups, M (for Major), O (for Outlier), and N (for New, or Non-M, Non-O). The vast majority of strains found worldwide belong to the group M. Group O seems to be endemic to and largely confined to Cameroon and neighboring countries in West Central Africa, where these viruses represent a small minority of HIV-1 strains. The group N is represented by a limited number of isolates from Cameroonian persons. The group M is further subdivided in 9 clades or subtypes (A to D, F to H, J and K).</text>
</comment>
<comment type="similarity">
    <text evidence="1">Belongs to the HIV-1 REV protein family.</text>
</comment>
<sequence length="106" mass="12008">ELLKTVRVIKFLYQSNPPPRPEGTRQARRNRRRRWRARQRQIQSLSGWILSTFLGRSAEPVPLQLPPLERLTLDCNEDCGTSGTQGVGSPQILVESPTVLESGTKE</sequence>
<name>REV_HV1BN</name>
<feature type="chain" id="PRO_0000085268" description="Protein Rev">
    <location>
        <begin position="1" status="less than"/>
        <end position="106"/>
    </location>
</feature>
<feature type="region of interest" description="Homomultimerization" evidence="1">
    <location>
        <begin position="8"/>
        <end position="16"/>
    </location>
</feature>
<feature type="region of interest" description="Disordered" evidence="2">
    <location>
        <begin position="13"/>
        <end position="36"/>
    </location>
</feature>
<feature type="short sequence motif" description="Nuclear localization signal and RNA-binding (RRE)" evidence="1">
    <location>
        <begin position="24"/>
        <end position="40"/>
    </location>
</feature>
<feature type="short sequence motif" description="Nuclear export signal and binding to XPO1" evidence="1">
    <location>
        <begin position="63"/>
        <end position="74"/>
    </location>
</feature>
<feature type="compositionally biased region" description="Basic residues" evidence="2">
    <location>
        <begin position="26"/>
        <end position="36"/>
    </location>
</feature>
<feature type="modified residue" description="Phosphoserine; by host" evidence="1">
    <location>
        <position position="82"/>
    </location>
</feature>
<feature type="modified residue" description="Phosphoserine; by host" evidence="1">
    <location>
        <position position="89"/>
    </location>
</feature>
<feature type="non-terminal residue">
    <location>
        <position position="1"/>
    </location>
</feature>
<keyword id="KW-0014">AIDS</keyword>
<keyword id="KW-1035">Host cytoplasm</keyword>
<keyword id="KW-1048">Host nucleus</keyword>
<keyword id="KW-0945">Host-virus interaction</keyword>
<keyword id="KW-0488">Methylation</keyword>
<keyword id="KW-0509">mRNA transport</keyword>
<keyword id="KW-0597">Phosphoprotein</keyword>
<keyword id="KW-0694">RNA-binding</keyword>
<keyword id="KW-0813">Transport</keyword>
<proteinExistence type="inferred from homology"/>
<protein>
    <recommendedName>
        <fullName evidence="1">Protein Rev</fullName>
    </recommendedName>
    <alternativeName>
        <fullName evidence="1">ART/TRS</fullName>
    </alternativeName>
    <alternativeName>
        <fullName evidence="1">Anti-repression transactivator</fullName>
    </alternativeName>
    <alternativeName>
        <fullName evidence="1">Regulator of expression of viral proteins</fullName>
    </alternativeName>
</protein>